<feature type="chain" id="PRO_0000104770" description="Large ribosomal subunit protein uL15">
    <location>
        <begin position="1"/>
        <end position="144"/>
    </location>
</feature>
<feature type="region of interest" description="Disordered" evidence="2">
    <location>
        <begin position="20"/>
        <end position="49"/>
    </location>
</feature>
<feature type="compositionally biased region" description="Gly residues" evidence="2">
    <location>
        <begin position="21"/>
        <end position="31"/>
    </location>
</feature>
<reference key="1">
    <citation type="journal article" date="2000" name="Science">
        <title>Complete genome sequence of Neisseria meningitidis serogroup B strain MC58.</title>
        <authorList>
            <person name="Tettelin H."/>
            <person name="Saunders N.J."/>
            <person name="Heidelberg J.F."/>
            <person name="Jeffries A.C."/>
            <person name="Nelson K.E."/>
            <person name="Eisen J.A."/>
            <person name="Ketchum K.A."/>
            <person name="Hood D.W."/>
            <person name="Peden J.F."/>
            <person name="Dodson R.J."/>
            <person name="Nelson W.C."/>
            <person name="Gwinn M.L."/>
            <person name="DeBoy R.T."/>
            <person name="Peterson J.D."/>
            <person name="Hickey E.K."/>
            <person name="Haft D.H."/>
            <person name="Salzberg S.L."/>
            <person name="White O."/>
            <person name="Fleischmann R.D."/>
            <person name="Dougherty B.A."/>
            <person name="Mason T.M."/>
            <person name="Ciecko A."/>
            <person name="Parksey D.S."/>
            <person name="Blair E."/>
            <person name="Cittone H."/>
            <person name="Clark E.B."/>
            <person name="Cotton M.D."/>
            <person name="Utterback T.R."/>
            <person name="Khouri H.M."/>
            <person name="Qin H."/>
            <person name="Vamathevan J.J."/>
            <person name="Gill J."/>
            <person name="Scarlato V."/>
            <person name="Masignani V."/>
            <person name="Pizza M."/>
            <person name="Grandi G."/>
            <person name="Sun L."/>
            <person name="Smith H.O."/>
            <person name="Fraser C.M."/>
            <person name="Moxon E.R."/>
            <person name="Rappuoli R."/>
            <person name="Venter J.C."/>
        </authorList>
    </citation>
    <scope>NUCLEOTIDE SEQUENCE [LARGE SCALE GENOMIC DNA]</scope>
    <source>
        <strain>ATCC BAA-335 / MC58</strain>
    </source>
</reference>
<comment type="function">
    <text evidence="1">Binds to the 23S rRNA.</text>
</comment>
<comment type="subunit">
    <text evidence="1">Part of the 50S ribosomal subunit.</text>
</comment>
<comment type="similarity">
    <text evidence="1">Belongs to the universal ribosomal protein uL15 family.</text>
</comment>
<sequence length="144" mass="14882">MFLNTIQPAVGATHAGRRVGRGIGSGLGKTGGRGHKGQKSRSGGFHKVGFEGGQMPLQRRLPKRGFKSLTASANAQLRLSELESIAVNEIDILVLKQAGLIASTVSNVKVIASGEISKAVALKGIKVTKGARAAIEAVGGKIEM</sequence>
<evidence type="ECO:0000255" key="1">
    <source>
        <dbReference type="HAMAP-Rule" id="MF_01341"/>
    </source>
</evidence>
<evidence type="ECO:0000256" key="2">
    <source>
        <dbReference type="SAM" id="MobiDB-lite"/>
    </source>
</evidence>
<evidence type="ECO:0000305" key="3"/>
<protein>
    <recommendedName>
        <fullName evidence="1">Large ribosomal subunit protein uL15</fullName>
    </recommendedName>
    <alternativeName>
        <fullName evidence="3">50S ribosomal protein L15</fullName>
    </alternativeName>
</protein>
<dbReference type="EMBL" id="AE002098">
    <property type="protein sequence ID" value="AAF40619.1"/>
    <property type="molecule type" value="Genomic_DNA"/>
</dbReference>
<dbReference type="PIR" id="C81233">
    <property type="entry name" value="C81233"/>
</dbReference>
<dbReference type="RefSeq" id="NP_273219.1">
    <property type="nucleotide sequence ID" value="NC_003112.2"/>
</dbReference>
<dbReference type="RefSeq" id="WP_002215449.1">
    <property type="nucleotide sequence ID" value="NC_003112.2"/>
</dbReference>
<dbReference type="SMR" id="Q9K1I2"/>
<dbReference type="FunCoup" id="Q9K1I2">
    <property type="interactions" value="594"/>
</dbReference>
<dbReference type="STRING" id="122586.NMB0161"/>
<dbReference type="PaxDb" id="122586-NMB0161"/>
<dbReference type="GeneID" id="93387236"/>
<dbReference type="KEGG" id="nme:NMB0161"/>
<dbReference type="PATRIC" id="fig|122586.8.peg.202"/>
<dbReference type="HOGENOM" id="CLU_055188_4_2_4"/>
<dbReference type="InParanoid" id="Q9K1I2"/>
<dbReference type="OrthoDB" id="9810293at2"/>
<dbReference type="Proteomes" id="UP000000425">
    <property type="component" value="Chromosome"/>
</dbReference>
<dbReference type="GO" id="GO:0022625">
    <property type="term" value="C:cytosolic large ribosomal subunit"/>
    <property type="evidence" value="ECO:0000318"/>
    <property type="project" value="GO_Central"/>
</dbReference>
<dbReference type="GO" id="GO:0019843">
    <property type="term" value="F:rRNA binding"/>
    <property type="evidence" value="ECO:0007669"/>
    <property type="project" value="UniProtKB-UniRule"/>
</dbReference>
<dbReference type="GO" id="GO:0003735">
    <property type="term" value="F:structural constituent of ribosome"/>
    <property type="evidence" value="ECO:0000318"/>
    <property type="project" value="GO_Central"/>
</dbReference>
<dbReference type="GO" id="GO:0006412">
    <property type="term" value="P:translation"/>
    <property type="evidence" value="ECO:0007669"/>
    <property type="project" value="UniProtKB-UniRule"/>
</dbReference>
<dbReference type="Gene3D" id="3.100.10.10">
    <property type="match status" value="1"/>
</dbReference>
<dbReference type="HAMAP" id="MF_01341">
    <property type="entry name" value="Ribosomal_uL15"/>
    <property type="match status" value="1"/>
</dbReference>
<dbReference type="InterPro" id="IPR030878">
    <property type="entry name" value="Ribosomal_uL15"/>
</dbReference>
<dbReference type="InterPro" id="IPR021131">
    <property type="entry name" value="Ribosomal_uL15/eL18"/>
</dbReference>
<dbReference type="InterPro" id="IPR036227">
    <property type="entry name" value="Ribosomal_uL15/eL18_sf"/>
</dbReference>
<dbReference type="InterPro" id="IPR005749">
    <property type="entry name" value="Ribosomal_uL15_bac-type"/>
</dbReference>
<dbReference type="InterPro" id="IPR001196">
    <property type="entry name" value="Ribosomal_uL15_CS"/>
</dbReference>
<dbReference type="NCBIfam" id="TIGR01071">
    <property type="entry name" value="rplO_bact"/>
    <property type="match status" value="1"/>
</dbReference>
<dbReference type="PANTHER" id="PTHR12934">
    <property type="entry name" value="50S RIBOSOMAL PROTEIN L15"/>
    <property type="match status" value="1"/>
</dbReference>
<dbReference type="PANTHER" id="PTHR12934:SF11">
    <property type="entry name" value="LARGE RIBOSOMAL SUBUNIT PROTEIN UL15M"/>
    <property type="match status" value="1"/>
</dbReference>
<dbReference type="Pfam" id="PF00828">
    <property type="entry name" value="Ribosomal_L27A"/>
    <property type="match status" value="1"/>
</dbReference>
<dbReference type="SUPFAM" id="SSF52080">
    <property type="entry name" value="Ribosomal proteins L15p and L18e"/>
    <property type="match status" value="1"/>
</dbReference>
<dbReference type="PROSITE" id="PS00475">
    <property type="entry name" value="RIBOSOMAL_L15"/>
    <property type="match status" value="1"/>
</dbReference>
<proteinExistence type="inferred from homology"/>
<organism>
    <name type="scientific">Neisseria meningitidis serogroup B (strain ATCC BAA-335 / MC58)</name>
    <dbReference type="NCBI Taxonomy" id="122586"/>
    <lineage>
        <taxon>Bacteria</taxon>
        <taxon>Pseudomonadati</taxon>
        <taxon>Pseudomonadota</taxon>
        <taxon>Betaproteobacteria</taxon>
        <taxon>Neisseriales</taxon>
        <taxon>Neisseriaceae</taxon>
        <taxon>Neisseria</taxon>
    </lineage>
</organism>
<gene>
    <name evidence="1" type="primary">rplO</name>
    <name type="ordered locus">NMB0161</name>
</gene>
<accession>Q9K1I2</accession>
<keyword id="KW-1185">Reference proteome</keyword>
<keyword id="KW-0687">Ribonucleoprotein</keyword>
<keyword id="KW-0689">Ribosomal protein</keyword>
<keyword id="KW-0694">RNA-binding</keyword>
<keyword id="KW-0699">rRNA-binding</keyword>
<name>RL15_NEIMB</name>